<keyword id="KW-0378">Hydrolase</keyword>
<keyword id="KW-0460">Magnesium</keyword>
<keyword id="KW-1185">Reference proteome</keyword>
<name>SPP1_ORYSJ</name>
<proteinExistence type="evidence at transcript level"/>
<reference key="1">
    <citation type="journal article" date="2002" name="Nature">
        <title>The genome sequence and structure of rice chromosome 1.</title>
        <authorList>
            <person name="Sasaki T."/>
            <person name="Matsumoto T."/>
            <person name="Yamamoto K."/>
            <person name="Sakata K."/>
            <person name="Baba T."/>
            <person name="Katayose Y."/>
            <person name="Wu J."/>
            <person name="Niimura Y."/>
            <person name="Cheng Z."/>
            <person name="Nagamura Y."/>
            <person name="Antonio B.A."/>
            <person name="Kanamori H."/>
            <person name="Hosokawa S."/>
            <person name="Masukawa M."/>
            <person name="Arikawa K."/>
            <person name="Chiden Y."/>
            <person name="Hayashi M."/>
            <person name="Okamoto M."/>
            <person name="Ando T."/>
            <person name="Aoki H."/>
            <person name="Arita K."/>
            <person name="Hamada M."/>
            <person name="Harada C."/>
            <person name="Hijishita S."/>
            <person name="Honda M."/>
            <person name="Ichikawa Y."/>
            <person name="Idonuma A."/>
            <person name="Iijima M."/>
            <person name="Ikeda M."/>
            <person name="Ikeno M."/>
            <person name="Ito S."/>
            <person name="Ito T."/>
            <person name="Ito Y."/>
            <person name="Ito Y."/>
            <person name="Iwabuchi A."/>
            <person name="Kamiya K."/>
            <person name="Karasawa W."/>
            <person name="Katagiri S."/>
            <person name="Kikuta A."/>
            <person name="Kobayashi N."/>
            <person name="Kono I."/>
            <person name="Machita K."/>
            <person name="Maehara T."/>
            <person name="Mizuno H."/>
            <person name="Mizubayashi T."/>
            <person name="Mukai Y."/>
            <person name="Nagasaki H."/>
            <person name="Nakashima M."/>
            <person name="Nakama Y."/>
            <person name="Nakamichi Y."/>
            <person name="Nakamura M."/>
            <person name="Namiki N."/>
            <person name="Negishi M."/>
            <person name="Ohta I."/>
            <person name="Ono N."/>
            <person name="Saji S."/>
            <person name="Sakai K."/>
            <person name="Shibata M."/>
            <person name="Shimokawa T."/>
            <person name="Shomura A."/>
            <person name="Song J."/>
            <person name="Takazaki Y."/>
            <person name="Terasawa K."/>
            <person name="Tsuji K."/>
            <person name="Waki K."/>
            <person name="Yamagata H."/>
            <person name="Yamane H."/>
            <person name="Yoshiki S."/>
            <person name="Yoshihara R."/>
            <person name="Yukawa K."/>
            <person name="Zhong H."/>
            <person name="Iwama H."/>
            <person name="Endo T."/>
            <person name="Ito H."/>
            <person name="Hahn J.H."/>
            <person name="Kim H.-I."/>
            <person name="Eun M.-Y."/>
            <person name="Yano M."/>
            <person name="Jiang J."/>
            <person name="Gojobori T."/>
        </authorList>
    </citation>
    <scope>NUCLEOTIDE SEQUENCE [LARGE SCALE GENOMIC DNA]</scope>
    <source>
        <strain>cv. Nipponbare</strain>
    </source>
</reference>
<reference key="2">
    <citation type="journal article" date="2005" name="Nature">
        <title>The map-based sequence of the rice genome.</title>
        <authorList>
            <consortium name="International rice genome sequencing project (IRGSP)"/>
        </authorList>
    </citation>
    <scope>NUCLEOTIDE SEQUENCE [LARGE SCALE GENOMIC DNA]</scope>
    <source>
        <strain>cv. Nipponbare</strain>
    </source>
</reference>
<reference key="3">
    <citation type="journal article" date="2008" name="Nucleic Acids Res.">
        <title>The rice annotation project database (RAP-DB): 2008 update.</title>
        <authorList>
            <consortium name="The rice annotation project (RAP)"/>
        </authorList>
    </citation>
    <scope>GENOME REANNOTATION</scope>
    <source>
        <strain>cv. Nipponbare</strain>
    </source>
</reference>
<reference key="4">
    <citation type="journal article" date="2013" name="Rice">
        <title>Improvement of the Oryza sativa Nipponbare reference genome using next generation sequence and optical map data.</title>
        <authorList>
            <person name="Kawahara Y."/>
            <person name="de la Bastide M."/>
            <person name="Hamilton J.P."/>
            <person name="Kanamori H."/>
            <person name="McCombie W.R."/>
            <person name="Ouyang S."/>
            <person name="Schwartz D.C."/>
            <person name="Tanaka T."/>
            <person name="Wu J."/>
            <person name="Zhou S."/>
            <person name="Childs K.L."/>
            <person name="Davidson R.M."/>
            <person name="Lin H."/>
            <person name="Quesada-Ocampo L."/>
            <person name="Vaillancourt B."/>
            <person name="Sakai H."/>
            <person name="Lee S.S."/>
            <person name="Kim J."/>
            <person name="Numa H."/>
            <person name="Itoh T."/>
            <person name="Buell C.R."/>
            <person name="Matsumoto T."/>
        </authorList>
    </citation>
    <scope>GENOME REANNOTATION</scope>
    <source>
        <strain>cv. Nipponbare</strain>
    </source>
</reference>
<reference key="5">
    <citation type="journal article" date="2005" name="PLoS Biol.">
        <title>The genomes of Oryza sativa: a history of duplications.</title>
        <authorList>
            <person name="Yu J."/>
            <person name="Wang J."/>
            <person name="Lin W."/>
            <person name="Li S."/>
            <person name="Li H."/>
            <person name="Zhou J."/>
            <person name="Ni P."/>
            <person name="Dong W."/>
            <person name="Hu S."/>
            <person name="Zeng C."/>
            <person name="Zhang J."/>
            <person name="Zhang Y."/>
            <person name="Li R."/>
            <person name="Xu Z."/>
            <person name="Li S."/>
            <person name="Li X."/>
            <person name="Zheng H."/>
            <person name="Cong L."/>
            <person name="Lin L."/>
            <person name="Yin J."/>
            <person name="Geng J."/>
            <person name="Li G."/>
            <person name="Shi J."/>
            <person name="Liu J."/>
            <person name="Lv H."/>
            <person name="Li J."/>
            <person name="Wang J."/>
            <person name="Deng Y."/>
            <person name="Ran L."/>
            <person name="Shi X."/>
            <person name="Wang X."/>
            <person name="Wu Q."/>
            <person name="Li C."/>
            <person name="Ren X."/>
            <person name="Wang J."/>
            <person name="Wang X."/>
            <person name="Li D."/>
            <person name="Liu D."/>
            <person name="Zhang X."/>
            <person name="Ji Z."/>
            <person name="Zhao W."/>
            <person name="Sun Y."/>
            <person name="Zhang Z."/>
            <person name="Bao J."/>
            <person name="Han Y."/>
            <person name="Dong L."/>
            <person name="Ji J."/>
            <person name="Chen P."/>
            <person name="Wu S."/>
            <person name="Liu J."/>
            <person name="Xiao Y."/>
            <person name="Bu D."/>
            <person name="Tan J."/>
            <person name="Yang L."/>
            <person name="Ye C."/>
            <person name="Zhang J."/>
            <person name="Xu J."/>
            <person name="Zhou Y."/>
            <person name="Yu Y."/>
            <person name="Zhang B."/>
            <person name="Zhuang S."/>
            <person name="Wei H."/>
            <person name="Liu B."/>
            <person name="Lei M."/>
            <person name="Yu H."/>
            <person name="Li Y."/>
            <person name="Xu H."/>
            <person name="Wei S."/>
            <person name="He X."/>
            <person name="Fang L."/>
            <person name="Zhang Z."/>
            <person name="Zhang Y."/>
            <person name="Huang X."/>
            <person name="Su Z."/>
            <person name="Tong W."/>
            <person name="Li J."/>
            <person name="Tong Z."/>
            <person name="Li S."/>
            <person name="Ye J."/>
            <person name="Wang L."/>
            <person name="Fang L."/>
            <person name="Lei T."/>
            <person name="Chen C.-S."/>
            <person name="Chen H.-C."/>
            <person name="Xu Z."/>
            <person name="Li H."/>
            <person name="Huang H."/>
            <person name="Zhang F."/>
            <person name="Xu H."/>
            <person name="Li N."/>
            <person name="Zhao C."/>
            <person name="Li S."/>
            <person name="Dong L."/>
            <person name="Huang Y."/>
            <person name="Li L."/>
            <person name="Xi Y."/>
            <person name="Qi Q."/>
            <person name="Li W."/>
            <person name="Zhang B."/>
            <person name="Hu W."/>
            <person name="Zhang Y."/>
            <person name="Tian X."/>
            <person name="Jiao Y."/>
            <person name="Liang X."/>
            <person name="Jin J."/>
            <person name="Gao L."/>
            <person name="Zheng W."/>
            <person name="Hao B."/>
            <person name="Liu S.-M."/>
            <person name="Wang W."/>
            <person name="Yuan L."/>
            <person name="Cao M."/>
            <person name="McDermott J."/>
            <person name="Samudrala R."/>
            <person name="Wang J."/>
            <person name="Wong G.K.-S."/>
            <person name="Yang H."/>
        </authorList>
    </citation>
    <scope>NUCLEOTIDE SEQUENCE [LARGE SCALE GENOMIC DNA]</scope>
    <source>
        <strain>cv. Nipponbare</strain>
    </source>
</reference>
<reference key="6">
    <citation type="journal article" date="2003" name="Science">
        <title>Collection, mapping, and annotation of over 28,000 cDNA clones from japonica rice.</title>
        <authorList>
            <consortium name="The rice full-length cDNA consortium"/>
        </authorList>
    </citation>
    <scope>NUCLEOTIDE SEQUENCE [LARGE SCALE MRNA]</scope>
    <source>
        <strain>cv. Nipponbare</strain>
    </source>
</reference>
<reference key="7">
    <citation type="journal article" date="2003" name="Gene">
        <title>Sucrose-phosphatase gene families in plants.</title>
        <authorList>
            <person name="Lunn J.E."/>
        </authorList>
    </citation>
    <scope>IDENTIFICATION</scope>
    <scope>GENE FAMILY</scope>
    <scope>NOMENCLATURE</scope>
</reference>
<dbReference type="EC" id="3.1.3.24"/>
<dbReference type="EMBL" id="AP003204">
    <property type="protein sequence ID" value="BAB61165.1"/>
    <property type="molecule type" value="Genomic_DNA"/>
</dbReference>
<dbReference type="EMBL" id="AP008207">
    <property type="protein sequence ID" value="BAF04995.1"/>
    <property type="status" value="ALT_SEQ"/>
    <property type="molecule type" value="Genomic_DNA"/>
</dbReference>
<dbReference type="EMBL" id="AP014957">
    <property type="protein sequence ID" value="BAS72209.1"/>
    <property type="status" value="ALT_SEQ"/>
    <property type="molecule type" value="Genomic_DNA"/>
</dbReference>
<dbReference type="EMBL" id="CM000138">
    <property type="protein sequence ID" value="EEE54607.1"/>
    <property type="molecule type" value="Genomic_DNA"/>
</dbReference>
<dbReference type="EMBL" id="AK071525">
    <property type="protein sequence ID" value="BAG92541.1"/>
    <property type="molecule type" value="mRNA"/>
</dbReference>
<dbReference type="RefSeq" id="XP_015620880.1">
    <property type="nucleotide sequence ID" value="XM_015765394.1"/>
</dbReference>
<dbReference type="SMR" id="Q94E75"/>
<dbReference type="FunCoup" id="Q94E75">
    <property type="interactions" value="351"/>
</dbReference>
<dbReference type="STRING" id="39947.Q94E75"/>
<dbReference type="PaxDb" id="39947-Q94E75"/>
<dbReference type="KEGG" id="dosa:Os01g0376700"/>
<dbReference type="eggNOG" id="ENOG502QTVT">
    <property type="taxonomic scope" value="Eukaryota"/>
</dbReference>
<dbReference type="HOGENOM" id="CLU_030534_1_0_1"/>
<dbReference type="InParanoid" id="Q94E75"/>
<dbReference type="OrthoDB" id="531008at2759"/>
<dbReference type="BioCyc" id="MetaCyc:MONOMER-1741"/>
<dbReference type="PlantReactome" id="R-OSA-1119465">
    <property type="pathway name" value="Sucrose biosynthesis"/>
</dbReference>
<dbReference type="UniPathway" id="UPA00371">
    <property type="reaction ID" value="UER00546"/>
</dbReference>
<dbReference type="Proteomes" id="UP000000763">
    <property type="component" value="Chromosome 1"/>
</dbReference>
<dbReference type="Proteomes" id="UP000007752">
    <property type="component" value="Chromosome 1"/>
</dbReference>
<dbReference type="Proteomes" id="UP000059680">
    <property type="component" value="Chromosome 1"/>
</dbReference>
<dbReference type="GO" id="GO:0000287">
    <property type="term" value="F:magnesium ion binding"/>
    <property type="evidence" value="ECO:0007669"/>
    <property type="project" value="InterPro"/>
</dbReference>
<dbReference type="GO" id="GO:0050307">
    <property type="term" value="F:sucrose-phosphate phosphatase activity"/>
    <property type="evidence" value="ECO:0007669"/>
    <property type="project" value="UniProtKB-EC"/>
</dbReference>
<dbReference type="GO" id="GO:0005986">
    <property type="term" value="P:sucrose biosynthetic process"/>
    <property type="evidence" value="ECO:0007669"/>
    <property type="project" value="UniProtKB-UniPathway"/>
</dbReference>
<dbReference type="CDD" id="cd02605">
    <property type="entry name" value="HAD_SPP"/>
    <property type="match status" value="1"/>
</dbReference>
<dbReference type="Gene3D" id="3.10.450.50">
    <property type="match status" value="1"/>
</dbReference>
<dbReference type="Gene3D" id="3.90.1070.10">
    <property type="match status" value="1"/>
</dbReference>
<dbReference type="Gene3D" id="3.40.50.1000">
    <property type="entry name" value="HAD superfamily/HAD-like"/>
    <property type="match status" value="1"/>
</dbReference>
<dbReference type="InterPro" id="IPR036412">
    <property type="entry name" value="HAD-like_sf"/>
</dbReference>
<dbReference type="InterPro" id="IPR006379">
    <property type="entry name" value="HAD-SF_hydro_IIB"/>
</dbReference>
<dbReference type="InterPro" id="IPR023214">
    <property type="entry name" value="HAD_sf"/>
</dbReference>
<dbReference type="InterPro" id="IPR032710">
    <property type="entry name" value="NTF2-like_dom_sf"/>
</dbReference>
<dbReference type="InterPro" id="IPR006380">
    <property type="entry name" value="SPP-like_dom"/>
</dbReference>
<dbReference type="InterPro" id="IPR013679">
    <property type="entry name" value="SPP_C"/>
</dbReference>
<dbReference type="InterPro" id="IPR051518">
    <property type="entry name" value="Sucrose_Phosphatase"/>
</dbReference>
<dbReference type="InterPro" id="IPR012847">
    <property type="entry name" value="Sucrose_phosphatase_pln/cyn"/>
</dbReference>
<dbReference type="NCBIfam" id="TIGR01484">
    <property type="entry name" value="HAD-SF-IIB"/>
    <property type="match status" value="1"/>
</dbReference>
<dbReference type="NCBIfam" id="TIGR01482">
    <property type="entry name" value="SPP-subfamily"/>
    <property type="match status" value="1"/>
</dbReference>
<dbReference type="NCBIfam" id="TIGR01485">
    <property type="entry name" value="SPP_plant-cyano"/>
    <property type="match status" value="1"/>
</dbReference>
<dbReference type="PANTHER" id="PTHR46521">
    <property type="entry name" value="SUCROSE-PHOSPHATASE 2-RELATED"/>
    <property type="match status" value="1"/>
</dbReference>
<dbReference type="PANTHER" id="PTHR46521:SF4">
    <property type="entry name" value="SUCROSE-PHOSPHATASE 2-RELATED"/>
    <property type="match status" value="1"/>
</dbReference>
<dbReference type="Pfam" id="PF05116">
    <property type="entry name" value="S6PP"/>
    <property type="match status" value="1"/>
</dbReference>
<dbReference type="Pfam" id="PF08472">
    <property type="entry name" value="S6PP_C"/>
    <property type="match status" value="1"/>
</dbReference>
<dbReference type="SFLD" id="SFLDG01140">
    <property type="entry name" value="C2.B:_Phosphomannomutase_and_P"/>
    <property type="match status" value="1"/>
</dbReference>
<dbReference type="SFLD" id="SFLDF00043">
    <property type="entry name" value="sucrose-phosphatase"/>
    <property type="match status" value="1"/>
</dbReference>
<dbReference type="SUPFAM" id="SSF56784">
    <property type="entry name" value="HAD-like"/>
    <property type="match status" value="1"/>
</dbReference>
<dbReference type="SUPFAM" id="SSF54427">
    <property type="entry name" value="NTF2-like"/>
    <property type="match status" value="1"/>
</dbReference>
<feature type="chain" id="PRO_0000350617" description="Probable sucrose-phosphatase 1">
    <location>
        <begin position="1"/>
        <end position="423"/>
    </location>
</feature>
<sequence>MDKLSGSARLIIVSDLDHTMVDHHDEENLSLLRFGALWESVYCQDSLLVFSTGRSPTLYKELRKEKPMLTPDITIMSVGTEITYGEAMVPDDGWEEYLNNKWDRNVVVEETAKFSELKLQPETEQRPHKVSFFVDKKSAQEVIKSLSGNMEKCGLDVKIIYSGGQDLDILPQGAGKGQALAYLLKKLSSCGKPPNNTLVCGDSGNDAELFSIPGVHGVMVSNAQEELLQWYAENAKGNPKIIHATERCAAGIIEAIGHFKLGPSVSPRDVGFPYVKEDHIKPTDAVVKFYVLYEKWRRAEVPKSDSVVQYFKNITHANGVIIQPSGLECSLHASVDALSSCYGEKQGKKYRTWVDRLFVSQSGSDSWLVRFDLWEAEGDARLCCLTSLALNVKPETPAGFLITHVHKTWLKGYSSADEQSSKL</sequence>
<protein>
    <recommendedName>
        <fullName>Probable sucrose-phosphatase 1</fullName>
        <shortName>OsSPP1</shortName>
        <ecNumber>3.1.3.24</ecNumber>
    </recommendedName>
</protein>
<organism>
    <name type="scientific">Oryza sativa subsp. japonica</name>
    <name type="common">Rice</name>
    <dbReference type="NCBI Taxonomy" id="39947"/>
    <lineage>
        <taxon>Eukaryota</taxon>
        <taxon>Viridiplantae</taxon>
        <taxon>Streptophyta</taxon>
        <taxon>Embryophyta</taxon>
        <taxon>Tracheophyta</taxon>
        <taxon>Spermatophyta</taxon>
        <taxon>Magnoliopsida</taxon>
        <taxon>Liliopsida</taxon>
        <taxon>Poales</taxon>
        <taxon>Poaceae</taxon>
        <taxon>BOP clade</taxon>
        <taxon>Oryzoideae</taxon>
        <taxon>Oryzeae</taxon>
        <taxon>Oryzinae</taxon>
        <taxon>Oryza</taxon>
        <taxon>Oryza sativa</taxon>
    </lineage>
</organism>
<comment type="function">
    <text evidence="1">Catalyzes the final step of sucrose synthesis.</text>
</comment>
<comment type="catalytic activity">
    <reaction>
        <text>sucrose 6(F)-phosphate + H2O = sucrose + phosphate</text>
        <dbReference type="Rhea" id="RHEA:19289"/>
        <dbReference type="ChEBI" id="CHEBI:15377"/>
        <dbReference type="ChEBI" id="CHEBI:17992"/>
        <dbReference type="ChEBI" id="CHEBI:43474"/>
        <dbReference type="ChEBI" id="CHEBI:57723"/>
        <dbReference type="EC" id="3.1.3.24"/>
    </reaction>
</comment>
<comment type="cofactor">
    <cofactor evidence="1">
        <name>Mg(2+)</name>
        <dbReference type="ChEBI" id="CHEBI:18420"/>
    </cofactor>
</comment>
<comment type="pathway">
    <text>Glycan biosynthesis; sucrose biosynthesis; sucrose from D-fructose 6-phosphate and UDP-alpha-D-glucose: step 2/2.</text>
</comment>
<comment type="subunit">
    <text evidence="1">Homodimer.</text>
</comment>
<comment type="similarity">
    <text evidence="2">Belongs to the sucrose phosphatase family.</text>
</comment>
<comment type="sequence caution" evidence="2">
    <conflict type="erroneous gene model prediction">
        <sequence resource="EMBL-CDS" id="BAF04995"/>
    </conflict>
</comment>
<comment type="sequence caution" evidence="2">
    <conflict type="erroneous gene model prediction">
        <sequence resource="EMBL-CDS" id="BAS72209"/>
    </conflict>
</comment>
<evidence type="ECO:0000250" key="1"/>
<evidence type="ECO:0000305" key="2"/>
<accession>Q94E75</accession>
<accession>A0A0N7KCZ7</accession>
<accession>A2ZTB7</accession>
<accession>B7EJJ4</accession>
<accession>Q0JMN3</accession>
<gene>
    <name type="primary">SPP1</name>
    <name type="ordered locus">Os01g0376700</name>
    <name type="ordered locus">LOC_Os01g27880</name>
    <name type="ORF">B1111C09.29</name>
    <name type="ORF">OsJ_001789</name>
    <name type="ORF">OsJ_01840</name>
</gene>